<organism>
    <name type="scientific">Vibrio parahaemolyticus serotype O3:K6 (strain RIMD 2210633)</name>
    <dbReference type="NCBI Taxonomy" id="223926"/>
    <lineage>
        <taxon>Bacteria</taxon>
        <taxon>Pseudomonadati</taxon>
        <taxon>Pseudomonadota</taxon>
        <taxon>Gammaproteobacteria</taxon>
        <taxon>Vibrionales</taxon>
        <taxon>Vibrionaceae</taxon>
        <taxon>Vibrio</taxon>
    </lineage>
</organism>
<comment type="function">
    <text evidence="1">Regulates arginine biosynthesis genes.</text>
</comment>
<comment type="pathway">
    <text>Amino-acid biosynthesis; L-arginine biosynthesis [regulation].</text>
</comment>
<comment type="subcellular location">
    <subcellularLocation>
        <location evidence="1">Cytoplasm</location>
    </subcellularLocation>
</comment>
<comment type="similarity">
    <text evidence="1">Belongs to the ArgR family.</text>
</comment>
<comment type="sequence caution" evidence="2">
    <conflict type="erroneous initiation">
        <sequence resource="EMBL-CDS" id="BAC58587"/>
    </conflict>
</comment>
<accession>Q87SU8</accession>
<dbReference type="EMBL" id="BA000031">
    <property type="protein sequence ID" value="BAC58587.1"/>
    <property type="status" value="ALT_INIT"/>
    <property type="molecule type" value="Genomic_DNA"/>
</dbReference>
<dbReference type="RefSeq" id="NP_796703.2">
    <property type="nucleotide sequence ID" value="NC_004603.1"/>
</dbReference>
<dbReference type="RefSeq" id="WP_005430583.1">
    <property type="nucleotide sequence ID" value="NC_004603.1"/>
</dbReference>
<dbReference type="SMR" id="Q87SU8"/>
<dbReference type="GeneID" id="83583060"/>
<dbReference type="KEGG" id="vpa:VP0324"/>
<dbReference type="PATRIC" id="fig|223926.6.peg.311"/>
<dbReference type="eggNOG" id="COG1438">
    <property type="taxonomic scope" value="Bacteria"/>
</dbReference>
<dbReference type="HOGENOM" id="CLU_097103_2_0_6"/>
<dbReference type="UniPathway" id="UPA00068"/>
<dbReference type="PRO" id="PR:Q87SU8"/>
<dbReference type="Proteomes" id="UP000002493">
    <property type="component" value="Chromosome 1"/>
</dbReference>
<dbReference type="GO" id="GO:0005737">
    <property type="term" value="C:cytoplasm"/>
    <property type="evidence" value="ECO:0007669"/>
    <property type="project" value="UniProtKB-SubCell"/>
</dbReference>
<dbReference type="GO" id="GO:0034618">
    <property type="term" value="F:arginine binding"/>
    <property type="evidence" value="ECO:0007669"/>
    <property type="project" value="InterPro"/>
</dbReference>
<dbReference type="GO" id="GO:0003677">
    <property type="term" value="F:DNA binding"/>
    <property type="evidence" value="ECO:0007669"/>
    <property type="project" value="UniProtKB-KW"/>
</dbReference>
<dbReference type="GO" id="GO:0003700">
    <property type="term" value="F:DNA-binding transcription factor activity"/>
    <property type="evidence" value="ECO:0007669"/>
    <property type="project" value="UniProtKB-UniRule"/>
</dbReference>
<dbReference type="GO" id="GO:0006526">
    <property type="term" value="P:L-arginine biosynthetic process"/>
    <property type="evidence" value="ECO:0007669"/>
    <property type="project" value="UniProtKB-UniPathway"/>
</dbReference>
<dbReference type="GO" id="GO:0051259">
    <property type="term" value="P:protein complex oligomerization"/>
    <property type="evidence" value="ECO:0007669"/>
    <property type="project" value="InterPro"/>
</dbReference>
<dbReference type="GO" id="GO:1900079">
    <property type="term" value="P:regulation of arginine biosynthetic process"/>
    <property type="evidence" value="ECO:0007669"/>
    <property type="project" value="UniProtKB-UniRule"/>
</dbReference>
<dbReference type="FunFam" id="1.10.10.10:FF:000074">
    <property type="entry name" value="Arginine repressor"/>
    <property type="match status" value="1"/>
</dbReference>
<dbReference type="Gene3D" id="3.30.1360.40">
    <property type="match status" value="1"/>
</dbReference>
<dbReference type="Gene3D" id="1.10.10.10">
    <property type="entry name" value="Winged helix-like DNA-binding domain superfamily/Winged helix DNA-binding domain"/>
    <property type="match status" value="1"/>
</dbReference>
<dbReference type="HAMAP" id="MF_00173">
    <property type="entry name" value="Arg_repressor"/>
    <property type="match status" value="1"/>
</dbReference>
<dbReference type="InterPro" id="IPR001669">
    <property type="entry name" value="Arg_repress"/>
</dbReference>
<dbReference type="InterPro" id="IPR020899">
    <property type="entry name" value="Arg_repress_C"/>
</dbReference>
<dbReference type="InterPro" id="IPR036251">
    <property type="entry name" value="Arg_repress_C_sf"/>
</dbReference>
<dbReference type="InterPro" id="IPR020900">
    <property type="entry name" value="Arg_repress_DNA-bd"/>
</dbReference>
<dbReference type="InterPro" id="IPR036388">
    <property type="entry name" value="WH-like_DNA-bd_sf"/>
</dbReference>
<dbReference type="InterPro" id="IPR036390">
    <property type="entry name" value="WH_DNA-bd_sf"/>
</dbReference>
<dbReference type="NCBIfam" id="TIGR01529">
    <property type="entry name" value="argR_whole"/>
    <property type="match status" value="1"/>
</dbReference>
<dbReference type="NCBIfam" id="NF003457">
    <property type="entry name" value="PRK05066.1"/>
    <property type="match status" value="1"/>
</dbReference>
<dbReference type="PANTHER" id="PTHR34471">
    <property type="entry name" value="ARGININE REPRESSOR"/>
    <property type="match status" value="1"/>
</dbReference>
<dbReference type="PANTHER" id="PTHR34471:SF1">
    <property type="entry name" value="ARGININE REPRESSOR"/>
    <property type="match status" value="1"/>
</dbReference>
<dbReference type="Pfam" id="PF01316">
    <property type="entry name" value="Arg_repressor"/>
    <property type="match status" value="1"/>
</dbReference>
<dbReference type="Pfam" id="PF02863">
    <property type="entry name" value="Arg_repressor_C"/>
    <property type="match status" value="1"/>
</dbReference>
<dbReference type="PRINTS" id="PR01467">
    <property type="entry name" value="ARGREPRESSOR"/>
</dbReference>
<dbReference type="SUPFAM" id="SSF55252">
    <property type="entry name" value="C-terminal domain of arginine repressor"/>
    <property type="match status" value="1"/>
</dbReference>
<dbReference type="SUPFAM" id="SSF46785">
    <property type="entry name" value="Winged helix' DNA-binding domain"/>
    <property type="match status" value="1"/>
</dbReference>
<name>ARGR_VIBPA</name>
<gene>
    <name evidence="1" type="primary">argR</name>
    <name type="ordered locus">VP0324</name>
</gene>
<evidence type="ECO:0000255" key="1">
    <source>
        <dbReference type="HAMAP-Rule" id="MF_00173"/>
    </source>
</evidence>
<evidence type="ECO:0000305" key="2"/>
<protein>
    <recommendedName>
        <fullName evidence="1">Arginine repressor</fullName>
    </recommendedName>
</protein>
<feature type="chain" id="PRO_0000205140" description="Arginine repressor">
    <location>
        <begin position="1"/>
        <end position="156"/>
    </location>
</feature>
<reference key="1">
    <citation type="journal article" date="2003" name="Lancet">
        <title>Genome sequence of Vibrio parahaemolyticus: a pathogenic mechanism distinct from that of V. cholerae.</title>
        <authorList>
            <person name="Makino K."/>
            <person name="Oshima K."/>
            <person name="Kurokawa K."/>
            <person name="Yokoyama K."/>
            <person name="Uda T."/>
            <person name="Tagomori K."/>
            <person name="Iijima Y."/>
            <person name="Najima M."/>
            <person name="Nakano M."/>
            <person name="Yamashita A."/>
            <person name="Kubota Y."/>
            <person name="Kimura S."/>
            <person name="Yasunaga T."/>
            <person name="Honda T."/>
            <person name="Shinagawa H."/>
            <person name="Hattori M."/>
            <person name="Iida T."/>
        </authorList>
    </citation>
    <scope>NUCLEOTIDE SEQUENCE [LARGE SCALE GENOMIC DNA]</scope>
    <source>
        <strain>RIMD 2210633</strain>
    </source>
</reference>
<keyword id="KW-0028">Amino-acid biosynthesis</keyword>
<keyword id="KW-0055">Arginine biosynthesis</keyword>
<keyword id="KW-0963">Cytoplasm</keyword>
<keyword id="KW-0238">DNA-binding</keyword>
<keyword id="KW-0678">Repressor</keyword>
<keyword id="KW-0804">Transcription</keyword>
<keyword id="KW-0805">Transcription regulation</keyword>
<proteinExistence type="inferred from homology"/>
<sequence length="156" mass="16976">MRNSEKQDNLVRAFKALLKEESFGSQGEIVDALKQQGFESINQSKVSRMLTKFGAVRTRNAKMEMVYCLPAELGVPTVSSSLRELVLDIDHNAALVVIHTGPGAAQLIARLLDSLGKSEGILGVVAGDDTIFITPTMPVSTEQLFKSVCELFEYTG</sequence>